<comment type="subcellular location">
    <subcellularLocation>
        <location evidence="1">Nucleus</location>
    </subcellularLocation>
</comment>
<gene>
    <name type="ordered locus">At5g47150</name>
    <name type="ORF">K14A3.10</name>
</gene>
<proteinExistence type="evidence at transcript level"/>
<feature type="chain" id="PRO_0000396831" description="YDG domain-containing protein At5g47150">
    <location>
        <begin position="1"/>
        <end position="328"/>
    </location>
</feature>
<feature type="domain" description="YDG" evidence="1">
    <location>
        <begin position="176"/>
        <end position="320"/>
    </location>
</feature>
<dbReference type="EMBL" id="AB018117">
    <property type="protein sequence ID" value="BAB11611.1"/>
    <property type="molecule type" value="Genomic_DNA"/>
</dbReference>
<dbReference type="EMBL" id="AB025609">
    <property type="protein sequence ID" value="BAB11611.1"/>
    <property type="status" value="JOINED"/>
    <property type="molecule type" value="Genomic_DNA"/>
</dbReference>
<dbReference type="EMBL" id="CP002688">
    <property type="protein sequence ID" value="AED95476.1"/>
    <property type="molecule type" value="Genomic_DNA"/>
</dbReference>
<dbReference type="RefSeq" id="NP_199526.1">
    <property type="nucleotide sequence ID" value="NM_124086.3"/>
</dbReference>
<dbReference type="SMR" id="Q9FHI0"/>
<dbReference type="STRING" id="3702.Q9FHI0"/>
<dbReference type="PaxDb" id="3702-AT5G47150.1"/>
<dbReference type="ProteomicsDB" id="243230"/>
<dbReference type="DNASU" id="834761"/>
<dbReference type="EnsemblPlants" id="AT5G47150.1">
    <property type="protein sequence ID" value="AT5G47150.1"/>
    <property type="gene ID" value="AT5G47150"/>
</dbReference>
<dbReference type="GeneID" id="834761"/>
<dbReference type="Gramene" id="AT5G47150.1">
    <property type="protein sequence ID" value="AT5G47150.1"/>
    <property type="gene ID" value="AT5G47150"/>
</dbReference>
<dbReference type="KEGG" id="ath:AT5G47150"/>
<dbReference type="Araport" id="AT5G47150"/>
<dbReference type="TAIR" id="AT5G47150"/>
<dbReference type="eggNOG" id="ENOG502S1J4">
    <property type="taxonomic scope" value="Eukaryota"/>
</dbReference>
<dbReference type="HOGENOM" id="CLU_055030_0_0_1"/>
<dbReference type="InParanoid" id="Q9FHI0"/>
<dbReference type="OMA" id="HIDHIVA"/>
<dbReference type="PhylomeDB" id="Q9FHI0"/>
<dbReference type="PRO" id="PR:Q9FHI0"/>
<dbReference type="Proteomes" id="UP000006548">
    <property type="component" value="Chromosome 5"/>
</dbReference>
<dbReference type="ExpressionAtlas" id="Q9FHI0">
    <property type="expression patterns" value="baseline and differential"/>
</dbReference>
<dbReference type="GO" id="GO:0005634">
    <property type="term" value="C:nucleus"/>
    <property type="evidence" value="ECO:0007669"/>
    <property type="project" value="UniProtKB-SubCell"/>
</dbReference>
<dbReference type="Gene3D" id="2.30.280.10">
    <property type="entry name" value="SRA-YDG"/>
    <property type="match status" value="1"/>
</dbReference>
<dbReference type="InterPro" id="IPR051357">
    <property type="entry name" value="H3K9_HMTase_SUVAR3-9"/>
</dbReference>
<dbReference type="InterPro" id="IPR015947">
    <property type="entry name" value="PUA-like_sf"/>
</dbReference>
<dbReference type="InterPro" id="IPR036987">
    <property type="entry name" value="SRA-YDG_sf"/>
</dbReference>
<dbReference type="InterPro" id="IPR003105">
    <property type="entry name" value="SRA_YDG"/>
</dbReference>
<dbReference type="PANTHER" id="PTHR45660">
    <property type="entry name" value="HISTONE-LYSINE N-METHYLTRANSFERASE SETMAR"/>
    <property type="match status" value="1"/>
</dbReference>
<dbReference type="PANTHER" id="PTHR45660:SF23">
    <property type="entry name" value="YDG DOMAIN-CONTAINING PROTEIN"/>
    <property type="match status" value="1"/>
</dbReference>
<dbReference type="Pfam" id="PF02182">
    <property type="entry name" value="SAD_SRA"/>
    <property type="match status" value="1"/>
</dbReference>
<dbReference type="SMART" id="SM00466">
    <property type="entry name" value="SRA"/>
    <property type="match status" value="1"/>
</dbReference>
<dbReference type="SUPFAM" id="SSF88697">
    <property type="entry name" value="PUA domain-like"/>
    <property type="match status" value="1"/>
</dbReference>
<dbReference type="PROSITE" id="PS51015">
    <property type="entry name" value="YDG"/>
    <property type="match status" value="1"/>
</dbReference>
<accession>Q9FHI0</accession>
<keyword id="KW-0539">Nucleus</keyword>
<keyword id="KW-1185">Reference proteome</keyword>
<sequence>MSQKRSLVFAIRDFPPGCGTHIDVSSSLNHPAEKAFKHPRTGDVSGENLSFAEAKPEGTCLKRESADQDHIFAAPEHNAKREPAGQDHVVAATTVAYATSSHRQKVEIGNSDCDPTPREKVLEVLSLFKQVYNQLDRDKKARRGGDFLDATSRIDLKTLTVLEKMGKQVNTEKRIGSVPGINIGDVFQYKTELRVVGLHSKPMCGIDYIKLGDDRITTSIVASEGYGYNDTYNSGVMVYTGEGGNVINKQKKTEDQKLVKGNLALATSMRQKSQVRVIRGEERLDRKGKRYVYDGLYMVEEYWVERDVRGKSVYKFKLCRIPGQLPLT</sequence>
<organism>
    <name type="scientific">Arabidopsis thaliana</name>
    <name type="common">Mouse-ear cress</name>
    <dbReference type="NCBI Taxonomy" id="3702"/>
    <lineage>
        <taxon>Eukaryota</taxon>
        <taxon>Viridiplantae</taxon>
        <taxon>Streptophyta</taxon>
        <taxon>Embryophyta</taxon>
        <taxon>Tracheophyta</taxon>
        <taxon>Spermatophyta</taxon>
        <taxon>Magnoliopsida</taxon>
        <taxon>eudicotyledons</taxon>
        <taxon>Gunneridae</taxon>
        <taxon>Pentapetalae</taxon>
        <taxon>rosids</taxon>
        <taxon>malvids</taxon>
        <taxon>Brassicales</taxon>
        <taxon>Brassicaceae</taxon>
        <taxon>Camelineae</taxon>
        <taxon>Arabidopsis</taxon>
    </lineage>
</organism>
<protein>
    <recommendedName>
        <fullName>YDG domain-containing protein At5g47150</fullName>
    </recommendedName>
</protein>
<name>YDG1_ARATH</name>
<reference key="1">
    <citation type="journal article" date="2000" name="DNA Res.">
        <title>Structural analysis of Arabidopsis thaliana chromosome 5. X. Sequence features of the regions of 3,076,755 bp covered by sixty P1 and TAC clones.</title>
        <authorList>
            <person name="Sato S."/>
            <person name="Nakamura Y."/>
            <person name="Kaneko T."/>
            <person name="Katoh T."/>
            <person name="Asamizu E."/>
            <person name="Kotani H."/>
            <person name="Tabata S."/>
        </authorList>
    </citation>
    <scope>NUCLEOTIDE SEQUENCE [LARGE SCALE GENOMIC DNA]</scope>
    <source>
        <strain>cv. Columbia</strain>
    </source>
</reference>
<reference key="2">
    <citation type="submission" date="1999-04" db="EMBL/GenBank/DDBJ databases">
        <title>Structural analysis of Arabidopsis thaliana chromosome 5. XI.</title>
        <authorList>
            <person name="Kaneko T."/>
            <person name="Katoh T."/>
            <person name="Asamizu E."/>
            <person name="Sato S."/>
            <person name="Nakamura Y."/>
            <person name="Kotani H."/>
            <person name="Tabata S."/>
        </authorList>
    </citation>
    <scope>NUCLEOTIDE SEQUENCE [LARGE SCALE GENOMIC DNA]</scope>
    <source>
        <strain>cv. Columbia</strain>
    </source>
</reference>
<reference key="3">
    <citation type="journal article" date="2017" name="Plant J.">
        <title>Araport11: a complete reannotation of the Arabidopsis thaliana reference genome.</title>
        <authorList>
            <person name="Cheng C.Y."/>
            <person name="Krishnakumar V."/>
            <person name="Chan A.P."/>
            <person name="Thibaud-Nissen F."/>
            <person name="Schobel S."/>
            <person name="Town C.D."/>
        </authorList>
    </citation>
    <scope>GENOME REANNOTATION</scope>
    <source>
        <strain>cv. Columbia</strain>
    </source>
</reference>
<evidence type="ECO:0000255" key="1">
    <source>
        <dbReference type="PROSITE-ProRule" id="PRU00358"/>
    </source>
</evidence>